<name>YRIA_ECOLI</name>
<accession>P0DSG9</accession>
<accession>A0A7H2C797</accession>
<gene>
    <name evidence="2" type="primary">yriA</name>
    <name evidence="3" type="ordered locus">b4791</name>
</gene>
<protein>
    <recommendedName>
        <fullName evidence="2">Protein YriA</fullName>
    </recommendedName>
</protein>
<proteinExistence type="evidence at protein level"/>
<comment type="induction">
    <text evidence="1">Expressed in both exponential and stationary phase in rich medium; expression is higher in exponential phase (at protein level).</text>
</comment>
<comment type="miscellaneous">
    <text evidence="1">This gene overlaps yriB on the same strand in another reading frame.</text>
</comment>
<evidence type="ECO:0000269" key="1">
    <source>
    </source>
</evidence>
<evidence type="ECO:0000303" key="2">
    <source>
    </source>
</evidence>
<evidence type="ECO:0000312" key="3">
    <source>
        <dbReference type="EMBL" id="QNV50544.1"/>
    </source>
</evidence>
<reference key="1">
    <citation type="journal article" date="1997" name="Science">
        <title>The complete genome sequence of Escherichia coli K-12.</title>
        <authorList>
            <person name="Blattner F.R."/>
            <person name="Plunkett G. III"/>
            <person name="Bloch C.A."/>
            <person name="Perna N.T."/>
            <person name="Burland V."/>
            <person name="Riley M."/>
            <person name="Collado-Vides J."/>
            <person name="Glasner J.D."/>
            <person name="Rode C.K."/>
            <person name="Mayhew G.F."/>
            <person name="Gregor J."/>
            <person name="Davis N.W."/>
            <person name="Kirkpatrick H.A."/>
            <person name="Goeden M.A."/>
            <person name="Rose D.J."/>
            <person name="Mau B."/>
            <person name="Shao Y."/>
        </authorList>
    </citation>
    <scope>NUCLEOTIDE SEQUENCE [LARGE SCALE GENOMIC DNA]</scope>
    <source>
        <strain>K12 / MG1655 / ATCC 47076</strain>
    </source>
</reference>
<reference key="2">
    <citation type="journal article" date="2019" name="MBio">
        <title>Identifying small proteins by ribosome profiling with stalled initiation complexes.</title>
        <authorList>
            <person name="Weaver J."/>
            <person name="Mohammad F."/>
            <person name="Buskirk A.R."/>
            <person name="Storz G."/>
        </authorList>
    </citation>
    <scope>IDENTIFICATION</scope>
    <scope>INDUCTION</scope>
    <source>
        <strain>K12 / MG1655 / ATCC 47076</strain>
    </source>
</reference>
<feature type="chain" id="PRO_0000447166" description="Protein YriA">
    <location>
        <begin position="1"/>
        <end position="24"/>
    </location>
</feature>
<keyword id="KW-1185">Reference proteome</keyword>
<organism>
    <name type="scientific">Escherichia coli (strain K12)</name>
    <dbReference type="NCBI Taxonomy" id="83333"/>
    <lineage>
        <taxon>Bacteria</taxon>
        <taxon>Pseudomonadati</taxon>
        <taxon>Pseudomonadota</taxon>
        <taxon>Gammaproteobacteria</taxon>
        <taxon>Enterobacterales</taxon>
        <taxon>Enterobacteriaceae</taxon>
        <taxon>Escherichia</taxon>
    </lineage>
</organism>
<dbReference type="EMBL" id="U00096">
    <property type="protein sequence ID" value="QNV50544.1"/>
    <property type="molecule type" value="Genomic_DNA"/>
</dbReference>
<dbReference type="InParanoid" id="P0DSG9"/>
<dbReference type="BioCyc" id="EcoCyc:MONOMER0-4503"/>
<dbReference type="Proteomes" id="UP000000625">
    <property type="component" value="Chromosome"/>
</dbReference>
<sequence length="24" mass="2925">MLYWLGILIAYADRRPDKVFTLIR</sequence>